<reference key="1">
    <citation type="journal article" date="2006" name="Nat. Biotechnol.">
        <title>Genome sequence of the bioplastic-producing 'Knallgas' bacterium Ralstonia eutropha H16.</title>
        <authorList>
            <person name="Pohlmann A."/>
            <person name="Fricke W.F."/>
            <person name="Reinecke F."/>
            <person name="Kusian B."/>
            <person name="Liesegang H."/>
            <person name="Cramm R."/>
            <person name="Eitinger T."/>
            <person name="Ewering C."/>
            <person name="Poetter M."/>
            <person name="Schwartz E."/>
            <person name="Strittmatter A."/>
            <person name="Voss I."/>
            <person name="Gottschalk G."/>
            <person name="Steinbuechel A."/>
            <person name="Friedrich B."/>
            <person name="Bowien B."/>
        </authorList>
    </citation>
    <scope>NUCLEOTIDE SEQUENCE [LARGE SCALE GENOMIC DNA]</scope>
    <source>
        <strain>ATCC 17699 / DSM 428 / KCTC 22496 / NCIMB 10442 / H16 / Stanier 337</strain>
    </source>
</reference>
<accession>Q0KER8</accession>
<organism>
    <name type="scientific">Cupriavidus necator (strain ATCC 17699 / DSM 428 / KCTC 22496 / NCIMB 10442 / H16 / Stanier 337)</name>
    <name type="common">Ralstonia eutropha</name>
    <dbReference type="NCBI Taxonomy" id="381666"/>
    <lineage>
        <taxon>Bacteria</taxon>
        <taxon>Pseudomonadati</taxon>
        <taxon>Pseudomonadota</taxon>
        <taxon>Betaproteobacteria</taxon>
        <taxon>Burkholderiales</taxon>
        <taxon>Burkholderiaceae</taxon>
        <taxon>Cupriavidus</taxon>
    </lineage>
</organism>
<proteinExistence type="inferred from homology"/>
<keyword id="KW-0997">Cell inner membrane</keyword>
<keyword id="KW-1003">Cell membrane</keyword>
<keyword id="KW-0350">Heme biosynthesis</keyword>
<keyword id="KW-0472">Membrane</keyword>
<keyword id="KW-1185">Reference proteome</keyword>
<keyword id="KW-0808">Transferase</keyword>
<keyword id="KW-0812">Transmembrane</keyword>
<keyword id="KW-1133">Transmembrane helix</keyword>
<gene>
    <name evidence="1" type="primary">ctaB</name>
    <name type="ordered locus">H16_A0352</name>
</gene>
<feature type="chain" id="PRO_0000327125" description="Protoheme IX farnesyltransferase">
    <location>
        <begin position="1"/>
        <end position="307"/>
    </location>
</feature>
<feature type="transmembrane region" description="Helical" evidence="1">
    <location>
        <begin position="31"/>
        <end position="51"/>
    </location>
</feature>
<feature type="transmembrane region" description="Helical" evidence="1">
    <location>
        <begin position="55"/>
        <end position="75"/>
    </location>
</feature>
<feature type="transmembrane region" description="Helical" evidence="1">
    <location>
        <begin position="103"/>
        <end position="123"/>
    </location>
</feature>
<feature type="transmembrane region" description="Helical" evidence="1">
    <location>
        <begin position="125"/>
        <end position="145"/>
    </location>
</feature>
<feature type="transmembrane region" description="Helical" evidence="1">
    <location>
        <begin position="153"/>
        <end position="173"/>
    </location>
</feature>
<feature type="transmembrane region" description="Helical" evidence="1">
    <location>
        <begin position="179"/>
        <end position="199"/>
    </location>
</feature>
<feature type="transmembrane region" description="Helical" evidence="1">
    <location>
        <begin position="223"/>
        <end position="243"/>
    </location>
</feature>
<feature type="transmembrane region" description="Helical" evidence="1">
    <location>
        <begin position="246"/>
        <end position="266"/>
    </location>
</feature>
<feature type="transmembrane region" description="Helical" evidence="1">
    <location>
        <begin position="285"/>
        <end position="305"/>
    </location>
</feature>
<name>COXX_CUPNH</name>
<evidence type="ECO:0000255" key="1">
    <source>
        <dbReference type="HAMAP-Rule" id="MF_00154"/>
    </source>
</evidence>
<sequence length="307" mass="33845">MVTATHPHSLGKLSRIRHLARQYAALTKPRVTQLAVFCAIIGMFLATPGMVPWRVLIGGAAGIWLLAGAAFAINCLVEQKIDALMRRTAWRPSATGEITTPQTLVFSAILGGAGMWLLHVYANDLTMWLTFATFLGYAVVYTILLKPATPQNIVIGGLSGAMPPALGWAAVAGEVPAEAWFLVLIIFTWTPPHFWALALYRRADYAKSGLPMLPVTHGERYTLLHILLYTLIMIAATLLPFVYGMSGYIYLAAALALGAGFLAYAWKMYRNYSDELAQRAFRFSILYLSLLFAALLVDHYFKFVPQV</sequence>
<comment type="function">
    <text evidence="1">Converts heme B (protoheme IX) to heme O by substitution of the vinyl group on carbon 2 of heme B porphyrin ring with a hydroxyethyl farnesyl side group.</text>
</comment>
<comment type="catalytic activity">
    <reaction evidence="1">
        <text>heme b + (2E,6E)-farnesyl diphosphate + H2O = Fe(II)-heme o + diphosphate</text>
        <dbReference type="Rhea" id="RHEA:28070"/>
        <dbReference type="ChEBI" id="CHEBI:15377"/>
        <dbReference type="ChEBI" id="CHEBI:33019"/>
        <dbReference type="ChEBI" id="CHEBI:60344"/>
        <dbReference type="ChEBI" id="CHEBI:60530"/>
        <dbReference type="ChEBI" id="CHEBI:175763"/>
        <dbReference type="EC" id="2.5.1.141"/>
    </reaction>
</comment>
<comment type="pathway">
    <text evidence="1">Porphyrin-containing compound metabolism; heme O biosynthesis; heme O from protoheme: step 1/1.</text>
</comment>
<comment type="subcellular location">
    <subcellularLocation>
        <location evidence="1">Cell inner membrane</location>
        <topology evidence="1">Multi-pass membrane protein</topology>
    </subcellularLocation>
</comment>
<comment type="miscellaneous">
    <text evidence="1">Carbon 2 of the heme B porphyrin ring is defined according to the Fischer nomenclature.</text>
</comment>
<comment type="similarity">
    <text evidence="1">Belongs to the UbiA prenyltransferase family. Protoheme IX farnesyltransferase subfamily.</text>
</comment>
<dbReference type="EC" id="2.5.1.141" evidence="1"/>
<dbReference type="EMBL" id="AM260479">
    <property type="protein sequence ID" value="CAJ91503.1"/>
    <property type="molecule type" value="Genomic_DNA"/>
</dbReference>
<dbReference type="SMR" id="Q0KER8"/>
<dbReference type="STRING" id="381666.H16_A0352"/>
<dbReference type="KEGG" id="reh:H16_A0352"/>
<dbReference type="eggNOG" id="COG0109">
    <property type="taxonomic scope" value="Bacteria"/>
</dbReference>
<dbReference type="HOGENOM" id="CLU_029631_0_2_4"/>
<dbReference type="UniPathway" id="UPA00834">
    <property type="reaction ID" value="UER00712"/>
</dbReference>
<dbReference type="Proteomes" id="UP000008210">
    <property type="component" value="Chromosome 1"/>
</dbReference>
<dbReference type="GO" id="GO:0005886">
    <property type="term" value="C:plasma membrane"/>
    <property type="evidence" value="ECO:0007669"/>
    <property type="project" value="UniProtKB-SubCell"/>
</dbReference>
<dbReference type="GO" id="GO:0008495">
    <property type="term" value="F:protoheme IX farnesyltransferase activity"/>
    <property type="evidence" value="ECO:0007669"/>
    <property type="project" value="UniProtKB-UniRule"/>
</dbReference>
<dbReference type="GO" id="GO:0048034">
    <property type="term" value="P:heme O biosynthetic process"/>
    <property type="evidence" value="ECO:0007669"/>
    <property type="project" value="UniProtKB-UniRule"/>
</dbReference>
<dbReference type="CDD" id="cd13957">
    <property type="entry name" value="PT_UbiA_Cox10"/>
    <property type="match status" value="1"/>
</dbReference>
<dbReference type="Gene3D" id="1.10.357.140">
    <property type="entry name" value="UbiA prenyltransferase"/>
    <property type="match status" value="1"/>
</dbReference>
<dbReference type="HAMAP" id="MF_00154">
    <property type="entry name" value="CyoE_CtaB"/>
    <property type="match status" value="1"/>
</dbReference>
<dbReference type="InterPro" id="IPR006369">
    <property type="entry name" value="Protohaem_IX_farnesylTrfase"/>
</dbReference>
<dbReference type="InterPro" id="IPR000537">
    <property type="entry name" value="UbiA_prenyltransferase"/>
</dbReference>
<dbReference type="InterPro" id="IPR030470">
    <property type="entry name" value="UbiA_prenylTrfase_CS"/>
</dbReference>
<dbReference type="InterPro" id="IPR044878">
    <property type="entry name" value="UbiA_sf"/>
</dbReference>
<dbReference type="NCBIfam" id="TIGR01473">
    <property type="entry name" value="cyoE_ctaB"/>
    <property type="match status" value="1"/>
</dbReference>
<dbReference type="NCBIfam" id="NF003349">
    <property type="entry name" value="PRK04375.1-2"/>
    <property type="match status" value="1"/>
</dbReference>
<dbReference type="PANTHER" id="PTHR43448:SF7">
    <property type="entry name" value="4-HYDROXYBENZOATE SOLANESYLTRANSFERASE"/>
    <property type="match status" value="1"/>
</dbReference>
<dbReference type="PANTHER" id="PTHR43448">
    <property type="entry name" value="PROTOHEME IX FARNESYLTRANSFERASE, MITOCHONDRIAL"/>
    <property type="match status" value="1"/>
</dbReference>
<dbReference type="Pfam" id="PF01040">
    <property type="entry name" value="UbiA"/>
    <property type="match status" value="1"/>
</dbReference>
<dbReference type="PROSITE" id="PS00943">
    <property type="entry name" value="UBIA"/>
    <property type="match status" value="1"/>
</dbReference>
<protein>
    <recommendedName>
        <fullName evidence="1">Protoheme IX farnesyltransferase</fullName>
        <ecNumber evidence="1">2.5.1.141</ecNumber>
    </recommendedName>
    <alternativeName>
        <fullName evidence="1">Heme B farnesyltransferase</fullName>
    </alternativeName>
    <alternativeName>
        <fullName evidence="1">Heme O synthase</fullName>
    </alternativeName>
</protein>